<sequence length="422" mass="46848">MGLSRFNQDATCFVTSSEGNSVTIYNCDPFGKCFEMVDEDTQNIGDDDARGDDNSGGDDDLLVEMLFSTNLVAIVHRKQGILKSKKLKIVNIKRKTIICELSFPHPIQDVVMNRKRVCVLLNSDQIHIYDISCMKHLHTIDIWDSQVKSITGQGVDSLSNSGTSNMTSLRERSSTFSKSISPKICLSNDDRSILAFNCYSTSSKSVILNDVVIFDALNISPLNYINSVHKGNVASLAISPDGKFIATASEKGTLVRIFNTGAETESELLTPLLYEFRRGNRPCNINQLTFNSDSTLLGCVGDSDTIHIFKLDSTSRLLSMSVNSEDNSHITSEDIKALRKDPNSKQFTKLISKTIKKSIPSQALRRDFAHITIKNTKTKHILGFPKEFMNQVYVLSNDGSFFIYSLPSTSGSCVLSKQNDFK</sequence>
<proteinExistence type="inferred from homology"/>
<organism>
    <name type="scientific">Vanderwaltozyma polyspora (strain ATCC 22028 / DSM 70294 / BCRC 21397 / CBS 2163 / NBRC 10782 / NRRL Y-8283 / UCD 57-17)</name>
    <name type="common">Kluyveromyces polysporus</name>
    <dbReference type="NCBI Taxonomy" id="436907"/>
    <lineage>
        <taxon>Eukaryota</taxon>
        <taxon>Fungi</taxon>
        <taxon>Dikarya</taxon>
        <taxon>Ascomycota</taxon>
        <taxon>Saccharomycotina</taxon>
        <taxon>Saccharomycetes</taxon>
        <taxon>Saccharomycetales</taxon>
        <taxon>Saccharomycetaceae</taxon>
        <taxon>Vanderwaltozyma</taxon>
    </lineage>
</organism>
<keyword id="KW-0072">Autophagy</keyword>
<keyword id="KW-0963">Cytoplasm</keyword>
<keyword id="KW-0472">Membrane</keyword>
<keyword id="KW-0653">Protein transport</keyword>
<keyword id="KW-1185">Reference proteome</keyword>
<keyword id="KW-0677">Repeat</keyword>
<keyword id="KW-0813">Transport</keyword>
<keyword id="KW-0926">Vacuole</keyword>
<keyword id="KW-0853">WD repeat</keyword>
<gene>
    <name type="primary">ATG21</name>
    <name type="ORF">Kpol_242p8</name>
</gene>
<comment type="function">
    <text evidence="1">Required for cytoplasm to vacuole transport (Cvt) vesicles formation and mitophagy. Involved in binding of phosphatidylethanolamine to ATG8 and in recruitment of ATG8 and ATG5 to the pre-autophagosomal structure. Protects ATG8 from ARG4-mediated cleavage (By similarity).</text>
</comment>
<comment type="subcellular location">
    <subcellularLocation>
        <location evidence="1">Cytoplasm</location>
    </subcellularLocation>
    <subcellularLocation>
        <location evidence="1">Membrane</location>
        <topology evidence="1">Peripheral membrane protein</topology>
    </subcellularLocation>
    <subcellularLocation>
        <location evidence="1">Vacuole membrane</location>
        <topology evidence="1">Peripheral membrane protein</topology>
    </subcellularLocation>
    <text evidence="1">Vacuolar and perivacuolar punctate structures.</text>
</comment>
<comment type="domain">
    <text evidence="1">Contains a beta-propeller domain involved in specific binding to phosphatidylinositol 3,5-bisphosphate (PIP2).</text>
</comment>
<comment type="domain">
    <text evidence="2">The L/FRRG motif is essential for the cytoplasm to vacuole transport (Cvt) pathway and for the recruitment of ATG8 and ATG16 to the PAS in nutrient-rich medium and in both its recruitment to and dissociation from the PAS under starvation conditions.</text>
</comment>
<comment type="similarity">
    <text evidence="3">Belongs to the WD repeat PROPPIN family.</text>
</comment>
<accession>A7TTC8</accession>
<evidence type="ECO:0000250" key="1"/>
<evidence type="ECO:0000250" key="2">
    <source>
        <dbReference type="UniProtKB" id="Q02887"/>
    </source>
</evidence>
<evidence type="ECO:0000305" key="3"/>
<reference key="1">
    <citation type="journal article" date="2007" name="Proc. Natl. Acad. Sci. U.S.A.">
        <title>Independent sorting-out of thousands of duplicated gene pairs in two yeast species descended from a whole-genome duplication.</title>
        <authorList>
            <person name="Scannell D.R."/>
            <person name="Frank A.C."/>
            <person name="Conant G.C."/>
            <person name="Byrne K.P."/>
            <person name="Woolfit M."/>
            <person name="Wolfe K.H."/>
        </authorList>
    </citation>
    <scope>NUCLEOTIDE SEQUENCE [LARGE SCALE GENOMIC DNA]</scope>
    <source>
        <strain>ATCC 22028 / DSM 70294 / BCRC 21397 / CBS 2163 / NBRC 10782 / NRRL Y-8283 / UCD 57-17</strain>
    </source>
</reference>
<protein>
    <recommendedName>
        <fullName>Autophagy-related protein 21</fullName>
    </recommendedName>
</protein>
<feature type="chain" id="PRO_0000318012" description="Autophagy-related protein 21">
    <location>
        <begin position="1"/>
        <end position="422"/>
    </location>
</feature>
<feature type="repeat" description="WD 1">
    <location>
        <begin position="1"/>
        <end position="35"/>
    </location>
</feature>
<feature type="repeat" description="WD 2">
    <location>
        <begin position="102"/>
        <end position="153"/>
    </location>
</feature>
<feature type="repeat" description="WD 3">
    <location>
        <begin position="166"/>
        <end position="206"/>
    </location>
</feature>
<feature type="repeat" description="WD 4">
    <location>
        <begin position="228"/>
        <end position="268"/>
    </location>
</feature>
<feature type="repeat" description="WD 5">
    <location>
        <begin position="280"/>
        <end position="319"/>
    </location>
</feature>
<feature type="repeat" description="WD 6">
    <location>
        <begin position="374"/>
        <end position="414"/>
    </location>
</feature>
<feature type="short sequence motif" description="L/FRRG motif" evidence="2">
    <location>
        <begin position="276"/>
        <end position="280"/>
    </location>
</feature>
<name>ATG21_VANPO</name>
<dbReference type="EMBL" id="DS480559">
    <property type="protein sequence ID" value="EDO14485.1"/>
    <property type="molecule type" value="Genomic_DNA"/>
</dbReference>
<dbReference type="RefSeq" id="XP_001642343.1">
    <property type="nucleotide sequence ID" value="XM_001642293.1"/>
</dbReference>
<dbReference type="SMR" id="A7TTC8"/>
<dbReference type="FunCoup" id="A7TTC8">
    <property type="interactions" value="22"/>
</dbReference>
<dbReference type="STRING" id="436907.A7TTC8"/>
<dbReference type="GeneID" id="5542483"/>
<dbReference type="KEGG" id="vpo:Kpol_242p8"/>
<dbReference type="eggNOG" id="KOG2110">
    <property type="taxonomic scope" value="Eukaryota"/>
</dbReference>
<dbReference type="HOGENOM" id="CLU_025895_5_2_1"/>
<dbReference type="InParanoid" id="A7TTC8"/>
<dbReference type="OMA" id="MNRKRMC"/>
<dbReference type="OrthoDB" id="1667587at2759"/>
<dbReference type="PhylomeDB" id="A7TTC8"/>
<dbReference type="Proteomes" id="UP000000267">
    <property type="component" value="Unassembled WGS sequence"/>
</dbReference>
<dbReference type="GO" id="GO:0005829">
    <property type="term" value="C:cytosol"/>
    <property type="evidence" value="ECO:0007669"/>
    <property type="project" value="EnsemblFungi"/>
</dbReference>
<dbReference type="GO" id="GO:0005768">
    <property type="term" value="C:endosome"/>
    <property type="evidence" value="ECO:0007669"/>
    <property type="project" value="EnsemblFungi"/>
</dbReference>
<dbReference type="GO" id="GO:0000329">
    <property type="term" value="C:fungal-type vacuole membrane"/>
    <property type="evidence" value="ECO:0007669"/>
    <property type="project" value="EnsemblFungi"/>
</dbReference>
<dbReference type="GO" id="GO:0000407">
    <property type="term" value="C:phagophore assembly site"/>
    <property type="evidence" value="ECO:0007669"/>
    <property type="project" value="EnsemblFungi"/>
</dbReference>
<dbReference type="GO" id="GO:0080025">
    <property type="term" value="F:phosphatidylinositol-3,5-bisphosphate binding"/>
    <property type="evidence" value="ECO:0007669"/>
    <property type="project" value="EnsemblFungi"/>
</dbReference>
<dbReference type="GO" id="GO:0032266">
    <property type="term" value="F:phosphatidylinositol-3-phosphate binding"/>
    <property type="evidence" value="ECO:0007669"/>
    <property type="project" value="EnsemblFungi"/>
</dbReference>
<dbReference type="GO" id="GO:0070273">
    <property type="term" value="F:phosphatidylinositol-4-phosphate binding"/>
    <property type="evidence" value="ECO:0007669"/>
    <property type="project" value="EnsemblFungi"/>
</dbReference>
<dbReference type="GO" id="GO:0000422">
    <property type="term" value="P:autophagy of mitochondrion"/>
    <property type="evidence" value="ECO:0007669"/>
    <property type="project" value="EnsemblFungi"/>
</dbReference>
<dbReference type="GO" id="GO:0032258">
    <property type="term" value="P:cytoplasm to vacuole targeting by the Cvt pathway"/>
    <property type="evidence" value="ECO:0007669"/>
    <property type="project" value="EnsemblFungi"/>
</dbReference>
<dbReference type="GO" id="GO:0034727">
    <property type="term" value="P:piecemeal microautophagy of the nucleus"/>
    <property type="evidence" value="ECO:0007669"/>
    <property type="project" value="EnsemblFungi"/>
</dbReference>
<dbReference type="GO" id="GO:0034497">
    <property type="term" value="P:protein localization to phagophore assembly site"/>
    <property type="evidence" value="ECO:0007669"/>
    <property type="project" value="EnsemblFungi"/>
</dbReference>
<dbReference type="GO" id="GO:0016050">
    <property type="term" value="P:vesicle organization"/>
    <property type="evidence" value="ECO:0007669"/>
    <property type="project" value="EnsemblFungi"/>
</dbReference>
<dbReference type="Gene3D" id="2.130.10.10">
    <property type="entry name" value="YVTN repeat-like/Quinoprotein amine dehydrogenase"/>
    <property type="match status" value="1"/>
</dbReference>
<dbReference type="InterPro" id="IPR048720">
    <property type="entry name" value="PROPPIN"/>
</dbReference>
<dbReference type="InterPro" id="IPR015943">
    <property type="entry name" value="WD40/YVTN_repeat-like_dom_sf"/>
</dbReference>
<dbReference type="InterPro" id="IPR036322">
    <property type="entry name" value="WD40_repeat_dom_sf"/>
</dbReference>
<dbReference type="InterPro" id="IPR001680">
    <property type="entry name" value="WD40_rpt"/>
</dbReference>
<dbReference type="PANTHER" id="PTHR11227">
    <property type="entry name" value="WD-REPEAT PROTEIN INTERACTING WITH PHOSPHOINOSIDES WIPI -RELATED"/>
    <property type="match status" value="1"/>
</dbReference>
<dbReference type="Pfam" id="PF21032">
    <property type="entry name" value="PROPPIN"/>
    <property type="match status" value="2"/>
</dbReference>
<dbReference type="SMART" id="SM00320">
    <property type="entry name" value="WD40"/>
    <property type="match status" value="2"/>
</dbReference>
<dbReference type="SUPFAM" id="SSF50978">
    <property type="entry name" value="WD40 repeat-like"/>
    <property type="match status" value="1"/>
</dbReference>